<dbReference type="EMBL" id="U59459">
    <property type="protein sequence ID" value="AAB03224.1"/>
    <property type="molecule type" value="mRNA"/>
</dbReference>
<dbReference type="PIR" id="T07917">
    <property type="entry name" value="T07917"/>
</dbReference>
<dbReference type="RefSeq" id="XP_013717975.1">
    <property type="nucleotide sequence ID" value="XM_013862521.1"/>
</dbReference>
<dbReference type="SMR" id="Q39313"/>
<dbReference type="EnsemblPlants" id="CDX87658">
    <property type="protein sequence ID" value="CDX87658"/>
    <property type="gene ID" value="GSBRNA2T00146665001"/>
</dbReference>
<dbReference type="GeneID" id="106421680"/>
<dbReference type="Gramene" id="CDX87658">
    <property type="protein sequence ID" value="CDX87658"/>
    <property type="gene ID" value="GSBRNA2T00146665001"/>
</dbReference>
<dbReference type="KEGG" id="bna:106421680"/>
<dbReference type="OMA" id="CICYFDC"/>
<dbReference type="OrthoDB" id="1851987at2759"/>
<dbReference type="GO" id="GO:0005576">
    <property type="term" value="C:extracellular region"/>
    <property type="evidence" value="ECO:0007669"/>
    <property type="project" value="UniProtKB-SubCell"/>
</dbReference>
<dbReference type="GO" id="GO:0050832">
    <property type="term" value="P:defense response to fungus"/>
    <property type="evidence" value="ECO:0007669"/>
    <property type="project" value="UniProtKB-KW"/>
</dbReference>
<dbReference type="GO" id="GO:0031640">
    <property type="term" value="P:killing of cells of another organism"/>
    <property type="evidence" value="ECO:0007669"/>
    <property type="project" value="UniProtKB-KW"/>
</dbReference>
<dbReference type="FunFam" id="3.30.30.10:FF:000003">
    <property type="entry name" value="Defensin-like protein 1"/>
    <property type="match status" value="1"/>
</dbReference>
<dbReference type="Gene3D" id="3.30.30.10">
    <property type="entry name" value="Knottin, scorpion toxin-like"/>
    <property type="match status" value="1"/>
</dbReference>
<dbReference type="InterPro" id="IPR008176">
    <property type="entry name" value="Defensin_plant"/>
</dbReference>
<dbReference type="InterPro" id="IPR003614">
    <property type="entry name" value="Scorpion_toxin-like"/>
</dbReference>
<dbReference type="InterPro" id="IPR036574">
    <property type="entry name" value="Scorpion_toxin-like_sf"/>
</dbReference>
<dbReference type="PANTHER" id="PTHR33147">
    <property type="entry name" value="DEFENSIN-LIKE PROTEIN 1"/>
    <property type="match status" value="1"/>
</dbReference>
<dbReference type="PANTHER" id="PTHR33147:SF101">
    <property type="entry name" value="DEFENSIN-LIKE PROTEIN 13"/>
    <property type="match status" value="1"/>
</dbReference>
<dbReference type="Pfam" id="PF00304">
    <property type="entry name" value="Gamma-thionin"/>
    <property type="match status" value="1"/>
</dbReference>
<dbReference type="SMART" id="SM00505">
    <property type="entry name" value="Knot1"/>
    <property type="match status" value="1"/>
</dbReference>
<dbReference type="SUPFAM" id="SSF57095">
    <property type="entry name" value="Scorpion toxin-like"/>
    <property type="match status" value="1"/>
</dbReference>
<dbReference type="PROSITE" id="PS00940">
    <property type="entry name" value="GAMMA_THIONIN"/>
    <property type="match status" value="1"/>
</dbReference>
<organism>
    <name type="scientific">Brassica napus</name>
    <name type="common">Rape</name>
    <dbReference type="NCBI Taxonomy" id="3708"/>
    <lineage>
        <taxon>Eukaryota</taxon>
        <taxon>Viridiplantae</taxon>
        <taxon>Streptophyta</taxon>
        <taxon>Embryophyta</taxon>
        <taxon>Tracheophyta</taxon>
        <taxon>Spermatophyta</taxon>
        <taxon>Magnoliopsida</taxon>
        <taxon>eudicotyledons</taxon>
        <taxon>Gunneridae</taxon>
        <taxon>Pentapetalae</taxon>
        <taxon>rosids</taxon>
        <taxon>malvids</taxon>
        <taxon>Brassicales</taxon>
        <taxon>Brassicaceae</taxon>
        <taxon>Brassiceae</taxon>
        <taxon>Brassica</taxon>
    </lineage>
</organism>
<gene>
    <name type="primary">AFP3</name>
</gene>
<accession>Q39313</accession>
<keyword id="KW-0929">Antimicrobial</keyword>
<keyword id="KW-1015">Disulfide bond</keyword>
<keyword id="KW-0295">Fungicide</keyword>
<keyword id="KW-0611">Plant defense</keyword>
<keyword id="KW-0964">Secreted</keyword>
<keyword id="KW-0732">Signal</keyword>
<reference key="1">
    <citation type="submission" date="1996-05" db="EMBL/GenBank/DDBJ databases">
        <authorList>
            <person name="Sohn U."/>
            <person name="Lee C.M."/>
            <person name="Lee M.H."/>
            <person name="Kim J.H."/>
        </authorList>
    </citation>
    <scope>NUCLEOTIDE SEQUENCE [MRNA]</scope>
    <source>
        <strain>cv. Naehan</strain>
    </source>
</reference>
<proteinExistence type="inferred from homology"/>
<name>DEF3_BRANA</name>
<evidence type="ECO:0000250" key="1"/>
<evidence type="ECO:0000255" key="2"/>
<evidence type="ECO:0000305" key="3"/>
<protein>
    <recommendedName>
        <fullName>Defensin-like protein 3</fullName>
    </recommendedName>
    <alternativeName>
        <fullName>Cysteine-rich antifungal protein 3</fullName>
        <shortName>AFP3</shortName>
    </alternativeName>
</protein>
<feature type="signal peptide" evidence="2">
    <location>
        <begin position="1"/>
        <end position="29"/>
    </location>
</feature>
<feature type="chain" id="PRO_0000007035" description="Defensin-like protein 3">
    <location>
        <begin position="30"/>
        <end position="79"/>
    </location>
</feature>
<feature type="disulfide bond" evidence="1">
    <location>
        <begin position="32"/>
        <end position="79"/>
    </location>
</feature>
<feature type="disulfide bond" evidence="1">
    <location>
        <begin position="43"/>
        <end position="64"/>
    </location>
</feature>
<feature type="disulfide bond" evidence="1">
    <location>
        <begin position="49"/>
        <end position="73"/>
    </location>
</feature>
<feature type="disulfide bond" evidence="1">
    <location>
        <begin position="53"/>
        <end position="75"/>
    </location>
</feature>
<sequence>MAKFASIITLLFAALVVFAAFEAPTMVEAKLCERSSGTWSGVCGNNNACKNQCIRLEGAQHGSCNYVFPAHKCICYFPC</sequence>
<comment type="function">
    <text evidence="1">Possesses antifungal activity sensitive to inorganic cations.</text>
</comment>
<comment type="subcellular location">
    <subcellularLocation>
        <location>Secreted</location>
    </subcellularLocation>
</comment>
<comment type="similarity">
    <text evidence="3">Belongs to the DEFL family.</text>
</comment>